<name>LAMP_PETMA</name>
<dbReference type="EMBL" id="L05925">
    <property type="protein sequence ID" value="AAA49269.1"/>
    <property type="molecule type" value="mRNA"/>
</dbReference>
<dbReference type="EMBL" id="L05924">
    <property type="protein sequence ID" value="AAA49268.1"/>
    <property type="molecule type" value="mRNA"/>
</dbReference>
<dbReference type="PIR" id="C45051">
    <property type="entry name" value="C45051"/>
</dbReference>
<dbReference type="Proteomes" id="UP001318040">
    <property type="component" value="Unplaced"/>
</dbReference>
<dbReference type="GO" id="GO:0031012">
    <property type="term" value="C:extracellular matrix"/>
    <property type="evidence" value="ECO:0007669"/>
    <property type="project" value="InterPro"/>
</dbReference>
<dbReference type="GO" id="GO:0005576">
    <property type="term" value="C:extracellular region"/>
    <property type="evidence" value="ECO:0007669"/>
    <property type="project" value="UniProtKB-KW"/>
</dbReference>
<dbReference type="GO" id="GO:0005198">
    <property type="term" value="F:structural molecule activity"/>
    <property type="evidence" value="ECO:0007669"/>
    <property type="project" value="InterPro"/>
</dbReference>
<dbReference type="InterPro" id="IPR009437">
    <property type="entry name" value="Lamprin"/>
</dbReference>
<dbReference type="Pfam" id="PF06403">
    <property type="entry name" value="Lamprin"/>
    <property type="match status" value="1"/>
</dbReference>
<dbReference type="PIRSF" id="PIRSF002264">
    <property type="entry name" value="Lamprin"/>
    <property type="match status" value="1"/>
</dbReference>
<evidence type="ECO:0000269" key="1">
    <source>
    </source>
</evidence>
<evidence type="ECO:0000303" key="2">
    <source>
    </source>
</evidence>
<organism>
    <name type="scientific">Petromyzon marinus</name>
    <name type="common">Sea lamprey</name>
    <dbReference type="NCBI Taxonomy" id="7757"/>
    <lineage>
        <taxon>Eukaryota</taxon>
        <taxon>Metazoa</taxon>
        <taxon>Chordata</taxon>
        <taxon>Craniata</taxon>
        <taxon>Vertebrata</taxon>
        <taxon>Cyclostomata</taxon>
        <taxon>Hyperoartia</taxon>
        <taxon>Petromyzontiformes</taxon>
        <taxon>Petromyzontidae</taxon>
        <taxon>Petromyzon</taxon>
    </lineage>
</organism>
<reference key="1">
    <citation type="journal article" date="1993" name="J. Biol. Chem.">
        <title>Characterization of lamprin, an unusual matrix protein from lamprey cartilage. Implications for evolution, structure, and assembly of elastin and other fibrillar proteins.</title>
        <authorList>
            <person name="Robson P."/>
            <person name="Wright G.M."/>
            <person name="Sitarz E."/>
            <person name="Maiti A."/>
            <person name="Rawat M."/>
            <person name="Youson J.H."/>
            <person name="Keeley F.W."/>
        </authorList>
    </citation>
    <scope>NUCLEOTIDE SEQUENCE [MRNA] (ISOFORMS 0.9-10 AND 0.9-12)</scope>
    <scope>PROTEIN SEQUENCE OF 20-44</scope>
    <source>
        <tissue>Cartilage</tissue>
    </source>
</reference>
<keyword id="KW-0025">Alternative splicing</keyword>
<keyword id="KW-0903">Direct protein sequencing</keyword>
<keyword id="KW-0272">Extracellular matrix</keyword>
<keyword id="KW-0677">Repeat</keyword>
<keyword id="KW-0964">Secreted</keyword>
<keyword id="KW-0732">Signal</keyword>
<comment type="function">
    <text>Self-aggregating protein that is part of the soluble form of lamprin.</text>
</comment>
<comment type="subunit">
    <text>The polymeric lamprin chains self-aggregate to form fibers and have secondary structures particularly rich in beta-sheets and in beta-turns.</text>
</comment>
<comment type="subcellular location">
    <subcellularLocation>
        <location>Secreted</location>
        <location>Extracellular space</location>
        <location>Extracellular matrix</location>
    </subcellularLocation>
</comment>
<comment type="alternative products">
    <event type="alternative splicing"/>
    <isoform>
        <id>P33575-1</id>
        <name>0.9-12</name>
        <sequence type="displayed"/>
    </isoform>
    <isoform>
        <id>P33575-2</id>
        <name>0.9-10</name>
        <sequence type="described" ref="VSP_004302"/>
    </isoform>
</comment>
<sequence length="139" mass="13258">MAAAIQALLVLALLHLATATPVIGKQTVSTLSTGYLGHPVVGGLGYGGLGYGGLGVAGLGVAGLGYGGLGYPGAALGGVYTHHAAGLVHPYGGLGYHAAPYHHALGGLGYPLGIGAGVVAPHVVKGKIAAPLAPVVAAI</sequence>
<protein>
    <recommendedName>
        <fullName>Lamprin 0.9</fullName>
    </recommendedName>
    <alternativeName>
        <fullName>Cartilage matrix protein</fullName>
    </alternativeName>
</protein>
<feature type="signal peptide" evidence="1">
    <location>
        <begin position="1"/>
        <end position="19"/>
    </location>
</feature>
<feature type="chain" id="PRO_0000021576" description="Lamprin 0.9">
    <location>
        <begin position="20"/>
        <end position="139"/>
    </location>
</feature>
<feature type="repeat" description="1">
    <location>
        <begin position="42"/>
        <end position="46"/>
    </location>
</feature>
<feature type="repeat" description="2">
    <location>
        <begin position="47"/>
        <end position="51"/>
    </location>
</feature>
<feature type="repeat" description="3">
    <location>
        <begin position="52"/>
        <end position="56"/>
    </location>
</feature>
<feature type="repeat" description="4">
    <location>
        <begin position="57"/>
        <end position="61"/>
    </location>
</feature>
<feature type="repeat" description="5">
    <location>
        <begin position="62"/>
        <end position="66"/>
    </location>
</feature>
<feature type="repeat" description="6">
    <location>
        <begin position="67"/>
        <end position="71"/>
    </location>
</feature>
<feature type="repeat" description="7">
    <location>
        <begin position="92"/>
        <end position="96"/>
    </location>
</feature>
<feature type="repeat" description="8">
    <location>
        <begin position="106"/>
        <end position="110"/>
    </location>
</feature>
<feature type="region of interest" description="8 X 5 AA approximate repeats">
    <location>
        <begin position="42"/>
        <end position="110"/>
    </location>
</feature>
<feature type="splice variant" id="VSP_004302" description="In isoform 0.9-10." evidence="2">
    <location>
        <begin position="86"/>
        <end position="104"/>
    </location>
</feature>
<proteinExistence type="evidence at protein level"/>
<accession>P33575</accession>
<accession>P33576</accession>